<dbReference type="EMBL" id="CP000269">
    <property type="protein sequence ID" value="ABR88339.1"/>
    <property type="molecule type" value="Genomic_DNA"/>
</dbReference>
<dbReference type="RefSeq" id="WP_012079146.1">
    <property type="nucleotide sequence ID" value="NC_009659.1"/>
</dbReference>
<dbReference type="SMR" id="A6SXI2"/>
<dbReference type="STRING" id="375286.mma_1289"/>
<dbReference type="KEGG" id="mms:mma_1289"/>
<dbReference type="eggNOG" id="COG0249">
    <property type="taxonomic scope" value="Bacteria"/>
</dbReference>
<dbReference type="HOGENOM" id="CLU_002472_4_0_4"/>
<dbReference type="OrthoDB" id="9802448at2"/>
<dbReference type="Proteomes" id="UP000006388">
    <property type="component" value="Chromosome"/>
</dbReference>
<dbReference type="GO" id="GO:0005829">
    <property type="term" value="C:cytosol"/>
    <property type="evidence" value="ECO:0007669"/>
    <property type="project" value="TreeGrafter"/>
</dbReference>
<dbReference type="GO" id="GO:0005524">
    <property type="term" value="F:ATP binding"/>
    <property type="evidence" value="ECO:0007669"/>
    <property type="project" value="UniProtKB-UniRule"/>
</dbReference>
<dbReference type="GO" id="GO:0140664">
    <property type="term" value="F:ATP-dependent DNA damage sensor activity"/>
    <property type="evidence" value="ECO:0007669"/>
    <property type="project" value="InterPro"/>
</dbReference>
<dbReference type="GO" id="GO:0003684">
    <property type="term" value="F:damaged DNA binding"/>
    <property type="evidence" value="ECO:0007669"/>
    <property type="project" value="UniProtKB-UniRule"/>
</dbReference>
<dbReference type="GO" id="GO:0030983">
    <property type="term" value="F:mismatched DNA binding"/>
    <property type="evidence" value="ECO:0007669"/>
    <property type="project" value="InterPro"/>
</dbReference>
<dbReference type="GO" id="GO:0006298">
    <property type="term" value="P:mismatch repair"/>
    <property type="evidence" value="ECO:0007669"/>
    <property type="project" value="UniProtKB-UniRule"/>
</dbReference>
<dbReference type="CDD" id="cd03284">
    <property type="entry name" value="ABC_MutS1"/>
    <property type="match status" value="1"/>
</dbReference>
<dbReference type="FunFam" id="3.40.1170.10:FF:000001">
    <property type="entry name" value="DNA mismatch repair protein MutS"/>
    <property type="match status" value="1"/>
</dbReference>
<dbReference type="FunFam" id="3.40.50.300:FF:000870">
    <property type="entry name" value="MutS protein homolog 4"/>
    <property type="match status" value="1"/>
</dbReference>
<dbReference type="Gene3D" id="1.10.1420.10">
    <property type="match status" value="2"/>
</dbReference>
<dbReference type="Gene3D" id="6.10.140.430">
    <property type="match status" value="1"/>
</dbReference>
<dbReference type="Gene3D" id="3.40.1170.10">
    <property type="entry name" value="DNA repair protein MutS, domain I"/>
    <property type="match status" value="1"/>
</dbReference>
<dbReference type="Gene3D" id="3.30.420.110">
    <property type="entry name" value="MutS, connector domain"/>
    <property type="match status" value="1"/>
</dbReference>
<dbReference type="Gene3D" id="3.40.50.300">
    <property type="entry name" value="P-loop containing nucleotide triphosphate hydrolases"/>
    <property type="match status" value="1"/>
</dbReference>
<dbReference type="HAMAP" id="MF_00096">
    <property type="entry name" value="MutS"/>
    <property type="match status" value="1"/>
</dbReference>
<dbReference type="InterPro" id="IPR005748">
    <property type="entry name" value="DNA_mismatch_repair_MutS"/>
</dbReference>
<dbReference type="InterPro" id="IPR007695">
    <property type="entry name" value="DNA_mismatch_repair_MutS-lik_N"/>
</dbReference>
<dbReference type="InterPro" id="IPR017261">
    <property type="entry name" value="DNA_mismatch_repair_MutS/MSH"/>
</dbReference>
<dbReference type="InterPro" id="IPR000432">
    <property type="entry name" value="DNA_mismatch_repair_MutS_C"/>
</dbReference>
<dbReference type="InterPro" id="IPR007861">
    <property type="entry name" value="DNA_mismatch_repair_MutS_clamp"/>
</dbReference>
<dbReference type="InterPro" id="IPR007696">
    <property type="entry name" value="DNA_mismatch_repair_MutS_core"/>
</dbReference>
<dbReference type="InterPro" id="IPR016151">
    <property type="entry name" value="DNA_mismatch_repair_MutS_N"/>
</dbReference>
<dbReference type="InterPro" id="IPR036187">
    <property type="entry name" value="DNA_mismatch_repair_MutS_sf"/>
</dbReference>
<dbReference type="InterPro" id="IPR007860">
    <property type="entry name" value="DNA_mmatch_repair_MutS_con_dom"/>
</dbReference>
<dbReference type="InterPro" id="IPR045076">
    <property type="entry name" value="MutS"/>
</dbReference>
<dbReference type="InterPro" id="IPR036678">
    <property type="entry name" value="MutS_con_dom_sf"/>
</dbReference>
<dbReference type="InterPro" id="IPR027417">
    <property type="entry name" value="P-loop_NTPase"/>
</dbReference>
<dbReference type="NCBIfam" id="TIGR01070">
    <property type="entry name" value="mutS1"/>
    <property type="match status" value="1"/>
</dbReference>
<dbReference type="NCBIfam" id="NF003810">
    <property type="entry name" value="PRK05399.1"/>
    <property type="match status" value="1"/>
</dbReference>
<dbReference type="PANTHER" id="PTHR11361:SF34">
    <property type="entry name" value="DNA MISMATCH REPAIR PROTEIN MSH1, MITOCHONDRIAL"/>
    <property type="match status" value="1"/>
</dbReference>
<dbReference type="PANTHER" id="PTHR11361">
    <property type="entry name" value="DNA MISMATCH REPAIR PROTEIN MUTS FAMILY MEMBER"/>
    <property type="match status" value="1"/>
</dbReference>
<dbReference type="Pfam" id="PF01624">
    <property type="entry name" value="MutS_I"/>
    <property type="match status" value="1"/>
</dbReference>
<dbReference type="Pfam" id="PF05188">
    <property type="entry name" value="MutS_II"/>
    <property type="match status" value="1"/>
</dbReference>
<dbReference type="Pfam" id="PF05192">
    <property type="entry name" value="MutS_III"/>
    <property type="match status" value="1"/>
</dbReference>
<dbReference type="Pfam" id="PF05190">
    <property type="entry name" value="MutS_IV"/>
    <property type="match status" value="1"/>
</dbReference>
<dbReference type="Pfam" id="PF00488">
    <property type="entry name" value="MutS_V"/>
    <property type="match status" value="1"/>
</dbReference>
<dbReference type="PIRSF" id="PIRSF037677">
    <property type="entry name" value="DNA_mis_repair_Msh6"/>
    <property type="match status" value="1"/>
</dbReference>
<dbReference type="SMART" id="SM00534">
    <property type="entry name" value="MUTSac"/>
    <property type="match status" value="1"/>
</dbReference>
<dbReference type="SMART" id="SM00533">
    <property type="entry name" value="MUTSd"/>
    <property type="match status" value="1"/>
</dbReference>
<dbReference type="SUPFAM" id="SSF55271">
    <property type="entry name" value="DNA repair protein MutS, domain I"/>
    <property type="match status" value="1"/>
</dbReference>
<dbReference type="SUPFAM" id="SSF53150">
    <property type="entry name" value="DNA repair protein MutS, domain II"/>
    <property type="match status" value="1"/>
</dbReference>
<dbReference type="SUPFAM" id="SSF48334">
    <property type="entry name" value="DNA repair protein MutS, domain III"/>
    <property type="match status" value="1"/>
</dbReference>
<dbReference type="SUPFAM" id="SSF52540">
    <property type="entry name" value="P-loop containing nucleoside triphosphate hydrolases"/>
    <property type="match status" value="1"/>
</dbReference>
<dbReference type="PROSITE" id="PS00486">
    <property type="entry name" value="DNA_MISMATCH_REPAIR_2"/>
    <property type="match status" value="1"/>
</dbReference>
<name>MUTS_JANMA</name>
<keyword id="KW-0067">ATP-binding</keyword>
<keyword id="KW-0227">DNA damage</keyword>
<keyword id="KW-0234">DNA repair</keyword>
<keyword id="KW-0238">DNA-binding</keyword>
<keyword id="KW-0547">Nucleotide-binding</keyword>
<gene>
    <name evidence="1" type="primary">mutS</name>
    <name type="ordered locus">mma_1289</name>
</gene>
<protein>
    <recommendedName>
        <fullName evidence="1">DNA mismatch repair protein MutS</fullName>
    </recommendedName>
</protein>
<accession>A6SXI2</accession>
<evidence type="ECO:0000255" key="1">
    <source>
        <dbReference type="HAMAP-Rule" id="MF_00096"/>
    </source>
</evidence>
<organism>
    <name type="scientific">Janthinobacterium sp. (strain Marseille)</name>
    <name type="common">Minibacterium massiliensis</name>
    <dbReference type="NCBI Taxonomy" id="375286"/>
    <lineage>
        <taxon>Bacteria</taxon>
        <taxon>Pseudomonadati</taxon>
        <taxon>Pseudomonadota</taxon>
        <taxon>Betaproteobacteria</taxon>
        <taxon>Burkholderiales</taxon>
        <taxon>Oxalobacteraceae</taxon>
        <taxon>Janthinobacterium</taxon>
    </lineage>
</organism>
<reference key="1">
    <citation type="journal article" date="2007" name="PLoS Genet.">
        <title>Genome analysis of Minibacterium massiliensis highlights the convergent evolution of water-living bacteria.</title>
        <authorList>
            <person name="Audic S."/>
            <person name="Robert C."/>
            <person name="Campagna B."/>
            <person name="Parinello H."/>
            <person name="Claverie J.-M."/>
            <person name="Raoult D."/>
            <person name="Drancourt M."/>
        </authorList>
    </citation>
    <scope>NUCLEOTIDE SEQUENCE [LARGE SCALE GENOMIC DNA]</scope>
    <source>
        <strain>Marseille</strain>
    </source>
</reference>
<sequence length="882" mass="96321">MKTIKPQTPEGNEKHTPMMQQYLRIKAEYPTTLVFYRMGDFYELFFDDAEKASRLLGITLTQRGASNGNPIKMAGVPFHAVDQYLSKLVKLGESIAICEQIGDPATSKGPVERKVLRVITPGTLTDSDLLPEKSEQPLLALYSTTQRKTATIGLAWLSMASGVLKLMEFATDAQNADVRLKHELERIAPAEILLPGSVNDLFSEFSLAKNTTVPDWHFDIAHGTKALYEQLNVGTLTGFGAENLSAAIGAAGALLRYAQSTQGKGLQHVRTLTVETENEFIGLDAATRRNLELTETIRGQDANAATLFSLLDHCRTAMGSRLLRHWLHHARRDQSVAMARHAAINALMRADACSGLASTLASVPDVERITTRIALLSARPRDLAGMRGGLQQLPSLRAYVSMCNKDADAPLLKTIHDALATPSDCLDLVERAIAMEPAAMVRDGGVIARGFDAELDELRGLSENAGQFLIDLETRERARTGINNLRVEYNKVHGFYIEVTHGQTDKVPDDYRRRQTLKNAERYITPELKAFEDKALSAQERALAREKYLYEQVLQQMTQHIATLQNIAHALAQLDTLVALAEHALRHNWCAPQLVSEPTITIEQGRHPVVENHIERFIANDCLLSSECKLLLITGPNMGGKSTYMRQVALITLLAYVGSFVPASSAVIGPIDRIFTRIGAADDLAGGRSTFMVEMTESAAILNGATENSLVLMDEVGRGTSTFDGLALAWAIAKHLIDNTKSFTLFATHYFELTQLPEIHPTAANVHLSAVEHKDSIVFLHAVQAGPASQSYGLQVAQLAGVPQPVIRAARKHLALLEANSMQATPQFDLFAGGGSPTTVESAAEPQQASAVDEAIAAINPDALSPREALDALYRLKELSNQ</sequence>
<proteinExistence type="inferred from homology"/>
<feature type="chain" id="PRO_0000335170" description="DNA mismatch repair protein MutS">
    <location>
        <begin position="1"/>
        <end position="882"/>
    </location>
</feature>
<feature type="binding site" evidence="1">
    <location>
        <begin position="635"/>
        <end position="642"/>
    </location>
    <ligand>
        <name>ATP</name>
        <dbReference type="ChEBI" id="CHEBI:30616"/>
    </ligand>
</feature>
<comment type="function">
    <text evidence="1">This protein is involved in the repair of mismatches in DNA. It is possible that it carries out the mismatch recognition step. This protein has a weak ATPase activity.</text>
</comment>
<comment type="similarity">
    <text evidence="1">Belongs to the DNA mismatch repair MutS family.</text>
</comment>